<keyword id="KW-0004">4Fe-4S</keyword>
<keyword id="KW-0408">Iron</keyword>
<keyword id="KW-0411">Iron-sulfur</keyword>
<keyword id="KW-0414">Isoprene biosynthesis</keyword>
<keyword id="KW-0479">Metal-binding</keyword>
<keyword id="KW-0560">Oxidoreductase</keyword>
<organism>
    <name type="scientific">Alteromonas mediterranea (strain DSM 17117 / CIP 110805 / LMG 28347 / Deep ecotype)</name>
    <dbReference type="NCBI Taxonomy" id="1774373"/>
    <lineage>
        <taxon>Bacteria</taxon>
        <taxon>Pseudomonadati</taxon>
        <taxon>Pseudomonadota</taxon>
        <taxon>Gammaproteobacteria</taxon>
        <taxon>Alteromonadales</taxon>
        <taxon>Alteromonadaceae</taxon>
        <taxon>Alteromonas/Salinimonas group</taxon>
        <taxon>Alteromonas</taxon>
    </lineage>
</organism>
<evidence type="ECO:0000255" key="1">
    <source>
        <dbReference type="HAMAP-Rule" id="MF_00159"/>
    </source>
</evidence>
<protein>
    <recommendedName>
        <fullName evidence="1">4-hydroxy-3-methylbut-2-en-1-yl diphosphate synthase (flavodoxin)</fullName>
        <ecNumber evidence="1">1.17.7.3</ecNumber>
    </recommendedName>
    <alternativeName>
        <fullName evidence="1">1-hydroxy-2-methyl-2-(E)-butenyl 4-diphosphate synthase</fullName>
    </alternativeName>
</protein>
<gene>
    <name evidence="1" type="primary">ispG</name>
    <name type="ordered locus">MADE_1005215</name>
</gene>
<name>ISPG_ALTMD</name>
<feature type="chain" id="PRO_1000097147" description="4-hydroxy-3-methylbut-2-en-1-yl diphosphate synthase (flavodoxin)">
    <location>
        <begin position="1"/>
        <end position="372"/>
    </location>
</feature>
<feature type="binding site" evidence="1">
    <location>
        <position position="270"/>
    </location>
    <ligand>
        <name>[4Fe-4S] cluster</name>
        <dbReference type="ChEBI" id="CHEBI:49883"/>
    </ligand>
</feature>
<feature type="binding site" evidence="1">
    <location>
        <position position="273"/>
    </location>
    <ligand>
        <name>[4Fe-4S] cluster</name>
        <dbReference type="ChEBI" id="CHEBI:49883"/>
    </ligand>
</feature>
<feature type="binding site" evidence="1">
    <location>
        <position position="305"/>
    </location>
    <ligand>
        <name>[4Fe-4S] cluster</name>
        <dbReference type="ChEBI" id="CHEBI:49883"/>
    </ligand>
</feature>
<feature type="binding site" evidence="1">
    <location>
        <position position="312"/>
    </location>
    <ligand>
        <name>[4Fe-4S] cluster</name>
        <dbReference type="ChEBI" id="CHEBI:49883"/>
    </ligand>
</feature>
<reference key="1">
    <citation type="journal article" date="2008" name="ISME J.">
        <title>Comparative genomics of two ecotypes of the marine planktonic copiotroph Alteromonas macleodii suggests alternative lifestyles associated with different kinds of particulate organic matter.</title>
        <authorList>
            <person name="Ivars-Martinez E."/>
            <person name="Martin-Cuadrado A.-B."/>
            <person name="D'Auria G."/>
            <person name="Mira A."/>
            <person name="Ferriera S."/>
            <person name="Johnson J."/>
            <person name="Friedman R."/>
            <person name="Rodriguez-Valera F."/>
        </authorList>
    </citation>
    <scope>NUCLEOTIDE SEQUENCE [LARGE SCALE GENOMIC DNA]</scope>
    <source>
        <strain>DSM 17117 / CIP 110805 / LMG 28347 / Deep ecotype</strain>
    </source>
</reference>
<dbReference type="EC" id="1.17.7.3" evidence="1"/>
<dbReference type="EMBL" id="CP001103">
    <property type="protein sequence ID" value="AEA97189.1"/>
    <property type="molecule type" value="Genomic_DNA"/>
</dbReference>
<dbReference type="RefSeq" id="WP_012517543.1">
    <property type="nucleotide sequence ID" value="NC_011138.3"/>
</dbReference>
<dbReference type="SMR" id="B4RV89"/>
<dbReference type="GeneID" id="56343086"/>
<dbReference type="KEGG" id="amc:MADE_1005215"/>
<dbReference type="HOGENOM" id="CLU_042258_0_0_6"/>
<dbReference type="UniPathway" id="UPA00056">
    <property type="reaction ID" value="UER00096"/>
</dbReference>
<dbReference type="Proteomes" id="UP000001870">
    <property type="component" value="Chromosome"/>
</dbReference>
<dbReference type="GO" id="GO:0051539">
    <property type="term" value="F:4 iron, 4 sulfur cluster binding"/>
    <property type="evidence" value="ECO:0007669"/>
    <property type="project" value="UniProtKB-UniRule"/>
</dbReference>
<dbReference type="GO" id="GO:0046429">
    <property type="term" value="F:4-hydroxy-3-methylbut-2-en-1-yl diphosphate synthase activity (ferredoxin)"/>
    <property type="evidence" value="ECO:0007669"/>
    <property type="project" value="UniProtKB-UniRule"/>
</dbReference>
<dbReference type="GO" id="GO:0141197">
    <property type="term" value="F:4-hydroxy-3-methylbut-2-enyl-diphosphate synthase activity (flavodoxin)"/>
    <property type="evidence" value="ECO:0007669"/>
    <property type="project" value="UniProtKB-EC"/>
</dbReference>
<dbReference type="GO" id="GO:0005506">
    <property type="term" value="F:iron ion binding"/>
    <property type="evidence" value="ECO:0007669"/>
    <property type="project" value="InterPro"/>
</dbReference>
<dbReference type="GO" id="GO:0019288">
    <property type="term" value="P:isopentenyl diphosphate biosynthetic process, methylerythritol 4-phosphate pathway"/>
    <property type="evidence" value="ECO:0007669"/>
    <property type="project" value="UniProtKB-UniRule"/>
</dbReference>
<dbReference type="GO" id="GO:0016114">
    <property type="term" value="P:terpenoid biosynthetic process"/>
    <property type="evidence" value="ECO:0007669"/>
    <property type="project" value="InterPro"/>
</dbReference>
<dbReference type="FunFam" id="3.20.20.20:FF:000001">
    <property type="entry name" value="4-hydroxy-3-methylbut-2-en-1-yl diphosphate synthase (flavodoxin)"/>
    <property type="match status" value="1"/>
</dbReference>
<dbReference type="FunFam" id="3.30.413.10:FF:000002">
    <property type="entry name" value="4-hydroxy-3-methylbut-2-en-1-yl diphosphate synthase (flavodoxin)"/>
    <property type="match status" value="1"/>
</dbReference>
<dbReference type="Gene3D" id="3.20.20.20">
    <property type="entry name" value="Dihydropteroate synthase-like"/>
    <property type="match status" value="1"/>
</dbReference>
<dbReference type="Gene3D" id="3.30.413.10">
    <property type="entry name" value="Sulfite Reductase Hemoprotein, domain 1"/>
    <property type="match status" value="1"/>
</dbReference>
<dbReference type="HAMAP" id="MF_00159">
    <property type="entry name" value="IspG"/>
    <property type="match status" value="1"/>
</dbReference>
<dbReference type="InterPro" id="IPR011005">
    <property type="entry name" value="Dihydropteroate_synth-like_sf"/>
</dbReference>
<dbReference type="InterPro" id="IPR036849">
    <property type="entry name" value="Enolase-like_C_sf"/>
</dbReference>
<dbReference type="InterPro" id="IPR016425">
    <property type="entry name" value="IspG_bac"/>
</dbReference>
<dbReference type="InterPro" id="IPR004588">
    <property type="entry name" value="IspG_bac-typ"/>
</dbReference>
<dbReference type="InterPro" id="IPR045854">
    <property type="entry name" value="NO2/SO3_Rdtase_4Fe4S_sf"/>
</dbReference>
<dbReference type="NCBIfam" id="TIGR00612">
    <property type="entry name" value="ispG_gcpE"/>
    <property type="match status" value="1"/>
</dbReference>
<dbReference type="NCBIfam" id="NF001540">
    <property type="entry name" value="PRK00366.1"/>
    <property type="match status" value="1"/>
</dbReference>
<dbReference type="PANTHER" id="PTHR30454">
    <property type="entry name" value="4-HYDROXY-3-METHYLBUT-2-EN-1-YL DIPHOSPHATE SYNTHASE"/>
    <property type="match status" value="1"/>
</dbReference>
<dbReference type="PANTHER" id="PTHR30454:SF0">
    <property type="entry name" value="4-HYDROXY-3-METHYLBUT-2-EN-1-YL DIPHOSPHATE SYNTHASE (FERREDOXIN), CHLOROPLASTIC"/>
    <property type="match status" value="1"/>
</dbReference>
<dbReference type="Pfam" id="PF04551">
    <property type="entry name" value="GcpE"/>
    <property type="match status" value="1"/>
</dbReference>
<dbReference type="PIRSF" id="PIRSF004640">
    <property type="entry name" value="IspG"/>
    <property type="match status" value="1"/>
</dbReference>
<dbReference type="SUPFAM" id="SSF51604">
    <property type="entry name" value="Enolase C-terminal domain-like"/>
    <property type="match status" value="1"/>
</dbReference>
<dbReference type="SUPFAM" id="SSF56014">
    <property type="entry name" value="Nitrite and sulphite reductase 4Fe-4S domain-like"/>
    <property type="match status" value="1"/>
</dbReference>
<sequence length="372" mass="40225">MFAESPIKRRKSTRINVGNVPIGDGAPIAVQSMTNTRTTDVAATVDQINRIVAVGGEIVRVSVPTMEAAEAFKEIKKQVSVPLVADIHFDYRIALKVAEYGVDCLRINPGNIGNMERVRSVVDCAKDKNIPIRIGVNGGSLEKDLQEKYGEPTPEALVESAMRHVDILDKLNFDQFKVSVKASDVFLAVGAYRLLAQKIDQPLHLGITEAGGQRAGAVKSAVGLGMLLAEGIGDTVRVSLAADPVEEIKVGFDILKSLRIRSRGINFIACPSCSRQEFDVIGTVNALEQRLEDILTPMDVSIIGCVVNGPGEAEVSDLGLTGARNMSGLYEDGKRVKERLPNDDLVDKLEAKIRAKAARLSEQNKIQVSVKD</sequence>
<proteinExistence type="inferred from homology"/>
<accession>B4RV89</accession>
<accession>F2G255</accession>
<comment type="function">
    <text evidence="1">Converts 2C-methyl-D-erythritol 2,4-cyclodiphosphate (ME-2,4cPP) into 1-hydroxy-2-methyl-2-(E)-butenyl 4-diphosphate.</text>
</comment>
<comment type="catalytic activity">
    <reaction evidence="1">
        <text>(2E)-4-hydroxy-3-methylbut-2-enyl diphosphate + oxidized [flavodoxin] + H2O + 2 H(+) = 2-C-methyl-D-erythritol 2,4-cyclic diphosphate + reduced [flavodoxin]</text>
        <dbReference type="Rhea" id="RHEA:43604"/>
        <dbReference type="Rhea" id="RHEA-COMP:10622"/>
        <dbReference type="Rhea" id="RHEA-COMP:10623"/>
        <dbReference type="ChEBI" id="CHEBI:15377"/>
        <dbReference type="ChEBI" id="CHEBI:15378"/>
        <dbReference type="ChEBI" id="CHEBI:57618"/>
        <dbReference type="ChEBI" id="CHEBI:58210"/>
        <dbReference type="ChEBI" id="CHEBI:58483"/>
        <dbReference type="ChEBI" id="CHEBI:128753"/>
        <dbReference type="EC" id="1.17.7.3"/>
    </reaction>
</comment>
<comment type="cofactor">
    <cofactor evidence="1">
        <name>[4Fe-4S] cluster</name>
        <dbReference type="ChEBI" id="CHEBI:49883"/>
    </cofactor>
    <text evidence="1">Binds 1 [4Fe-4S] cluster.</text>
</comment>
<comment type="pathway">
    <text evidence="1">Isoprenoid biosynthesis; isopentenyl diphosphate biosynthesis via DXP pathway; isopentenyl diphosphate from 1-deoxy-D-xylulose 5-phosphate: step 5/6.</text>
</comment>
<comment type="similarity">
    <text evidence="1">Belongs to the IspG family.</text>
</comment>